<reference key="1">
    <citation type="submission" date="2005-08" db="EMBL/GenBank/DDBJ databases">
        <title>Complete sequence of Pelodictyon luteolum DSM 273.</title>
        <authorList>
            <consortium name="US DOE Joint Genome Institute"/>
            <person name="Copeland A."/>
            <person name="Lucas S."/>
            <person name="Lapidus A."/>
            <person name="Barry K."/>
            <person name="Detter J.C."/>
            <person name="Glavina T."/>
            <person name="Hammon N."/>
            <person name="Israni S."/>
            <person name="Pitluck S."/>
            <person name="Bryant D."/>
            <person name="Schmutz J."/>
            <person name="Larimer F."/>
            <person name="Land M."/>
            <person name="Kyrpides N."/>
            <person name="Ivanova N."/>
            <person name="Richardson P."/>
        </authorList>
    </citation>
    <scope>NUCLEOTIDE SEQUENCE [LARGE SCALE GENOMIC DNA]</scope>
    <source>
        <strain>DSM 273 / BCRC 81028 / 2530</strain>
    </source>
</reference>
<comment type="function">
    <text evidence="2">With S4 and S5 plays an important role in translational accuracy.</text>
</comment>
<comment type="function">
    <text evidence="2">Interacts with and stabilizes bases of the 16S rRNA that are involved in tRNA selection in the A site and with the mRNA backbone. Located at the interface of the 30S and 50S subunits, it traverses the body of the 30S subunit contacting proteins on the other side and probably holding the rRNA structure together. The combined cluster of proteins S8, S12 and S17 appears to hold together the shoulder and platform of the 30S subunit.</text>
</comment>
<comment type="subunit">
    <text evidence="2">Part of the 30S ribosomal subunit. Contacts proteins S8 and S17. May interact with IF1 in the 30S initiation complex.</text>
</comment>
<comment type="similarity">
    <text evidence="2">Belongs to the universal ribosomal protein uS12 family.</text>
</comment>
<accession>Q3B6G6</accession>
<sequence length="129" mass="14237">MPTIQQLIRHGRSVKVSKTASPALEKCPQKRGVCTRVYTTTPKKPNSALRKVARVRLSNKIEVTAYIPGEGHNLQEHSIVLIRGGRVKDLPGVRYHIVRGTLDTSGVSDRKQSRSKYGAKQPKAVAAKK</sequence>
<dbReference type="EMBL" id="CP000096">
    <property type="protein sequence ID" value="ABB23065.1"/>
    <property type="molecule type" value="Genomic_DNA"/>
</dbReference>
<dbReference type="RefSeq" id="WP_011356941.1">
    <property type="nucleotide sequence ID" value="NC_007512.1"/>
</dbReference>
<dbReference type="SMR" id="Q3B6G6"/>
<dbReference type="STRING" id="319225.Plut_0175"/>
<dbReference type="KEGG" id="plt:Plut_0175"/>
<dbReference type="eggNOG" id="COG0048">
    <property type="taxonomic scope" value="Bacteria"/>
</dbReference>
<dbReference type="HOGENOM" id="CLU_104295_1_2_10"/>
<dbReference type="OrthoDB" id="9802366at2"/>
<dbReference type="Proteomes" id="UP000002709">
    <property type="component" value="Chromosome"/>
</dbReference>
<dbReference type="GO" id="GO:0015935">
    <property type="term" value="C:small ribosomal subunit"/>
    <property type="evidence" value="ECO:0007669"/>
    <property type="project" value="InterPro"/>
</dbReference>
<dbReference type="GO" id="GO:0019843">
    <property type="term" value="F:rRNA binding"/>
    <property type="evidence" value="ECO:0007669"/>
    <property type="project" value="UniProtKB-UniRule"/>
</dbReference>
<dbReference type="GO" id="GO:0003735">
    <property type="term" value="F:structural constituent of ribosome"/>
    <property type="evidence" value="ECO:0007669"/>
    <property type="project" value="InterPro"/>
</dbReference>
<dbReference type="GO" id="GO:0000049">
    <property type="term" value="F:tRNA binding"/>
    <property type="evidence" value="ECO:0007669"/>
    <property type="project" value="UniProtKB-UniRule"/>
</dbReference>
<dbReference type="GO" id="GO:0006412">
    <property type="term" value="P:translation"/>
    <property type="evidence" value="ECO:0007669"/>
    <property type="project" value="UniProtKB-UniRule"/>
</dbReference>
<dbReference type="CDD" id="cd03368">
    <property type="entry name" value="Ribosomal_S12"/>
    <property type="match status" value="1"/>
</dbReference>
<dbReference type="FunFam" id="2.40.50.140:FF:000001">
    <property type="entry name" value="30S ribosomal protein S12"/>
    <property type="match status" value="1"/>
</dbReference>
<dbReference type="Gene3D" id="2.40.50.140">
    <property type="entry name" value="Nucleic acid-binding proteins"/>
    <property type="match status" value="1"/>
</dbReference>
<dbReference type="HAMAP" id="MF_00403_B">
    <property type="entry name" value="Ribosomal_uS12_B"/>
    <property type="match status" value="1"/>
</dbReference>
<dbReference type="InterPro" id="IPR012340">
    <property type="entry name" value="NA-bd_OB-fold"/>
</dbReference>
<dbReference type="InterPro" id="IPR006032">
    <property type="entry name" value="Ribosomal_uS12"/>
</dbReference>
<dbReference type="InterPro" id="IPR005679">
    <property type="entry name" value="Ribosomal_uS12_bac"/>
</dbReference>
<dbReference type="NCBIfam" id="TIGR00981">
    <property type="entry name" value="rpsL_bact"/>
    <property type="match status" value="1"/>
</dbReference>
<dbReference type="PANTHER" id="PTHR11652">
    <property type="entry name" value="30S RIBOSOMAL PROTEIN S12 FAMILY MEMBER"/>
    <property type="match status" value="1"/>
</dbReference>
<dbReference type="Pfam" id="PF00164">
    <property type="entry name" value="Ribosom_S12_S23"/>
    <property type="match status" value="1"/>
</dbReference>
<dbReference type="PIRSF" id="PIRSF002133">
    <property type="entry name" value="Ribosomal_S12/S23"/>
    <property type="match status" value="1"/>
</dbReference>
<dbReference type="PRINTS" id="PR01034">
    <property type="entry name" value="RIBOSOMALS12"/>
</dbReference>
<dbReference type="SUPFAM" id="SSF50249">
    <property type="entry name" value="Nucleic acid-binding proteins"/>
    <property type="match status" value="1"/>
</dbReference>
<dbReference type="PROSITE" id="PS00055">
    <property type="entry name" value="RIBOSOMAL_S12"/>
    <property type="match status" value="1"/>
</dbReference>
<feature type="chain" id="PRO_0000238139" description="Small ribosomal subunit protein uS12">
    <location>
        <begin position="1"/>
        <end position="129"/>
    </location>
</feature>
<feature type="region of interest" description="Disordered" evidence="3">
    <location>
        <begin position="101"/>
        <end position="129"/>
    </location>
</feature>
<feature type="modified residue" description="3-methylthioaspartic acid" evidence="1">
    <location>
        <position position="89"/>
    </location>
</feature>
<gene>
    <name evidence="2" type="primary">rpsL</name>
    <name type="ordered locus">Plut_0175</name>
</gene>
<name>RS12_CHLL3</name>
<keyword id="KW-0488">Methylation</keyword>
<keyword id="KW-1185">Reference proteome</keyword>
<keyword id="KW-0687">Ribonucleoprotein</keyword>
<keyword id="KW-0689">Ribosomal protein</keyword>
<keyword id="KW-0694">RNA-binding</keyword>
<keyword id="KW-0699">rRNA-binding</keyword>
<keyword id="KW-0820">tRNA-binding</keyword>
<evidence type="ECO:0000250" key="1"/>
<evidence type="ECO:0000255" key="2">
    <source>
        <dbReference type="HAMAP-Rule" id="MF_00403"/>
    </source>
</evidence>
<evidence type="ECO:0000256" key="3">
    <source>
        <dbReference type="SAM" id="MobiDB-lite"/>
    </source>
</evidence>
<evidence type="ECO:0000305" key="4"/>
<protein>
    <recommendedName>
        <fullName evidence="2">Small ribosomal subunit protein uS12</fullName>
    </recommendedName>
    <alternativeName>
        <fullName evidence="4">30S ribosomal protein S12</fullName>
    </alternativeName>
</protein>
<proteinExistence type="inferred from homology"/>
<organism>
    <name type="scientific">Chlorobium luteolum (strain DSM 273 / BCRC 81028 / 2530)</name>
    <name type="common">Pelodictyon luteolum</name>
    <dbReference type="NCBI Taxonomy" id="319225"/>
    <lineage>
        <taxon>Bacteria</taxon>
        <taxon>Pseudomonadati</taxon>
        <taxon>Chlorobiota</taxon>
        <taxon>Chlorobiia</taxon>
        <taxon>Chlorobiales</taxon>
        <taxon>Chlorobiaceae</taxon>
        <taxon>Chlorobium/Pelodictyon group</taxon>
        <taxon>Pelodictyon</taxon>
    </lineage>
</organism>